<keyword id="KW-0007">Acetylation</keyword>
<keyword id="KW-0968">Cytoplasmic vesicle</keyword>
<keyword id="KW-0967">Endosome</keyword>
<keyword id="KW-0342">GTP-binding</keyword>
<keyword id="KW-0378">Hydrolase</keyword>
<keyword id="KW-0449">Lipoprotein</keyword>
<keyword id="KW-0460">Magnesium</keyword>
<keyword id="KW-0472">Membrane</keyword>
<keyword id="KW-0479">Metal-binding</keyword>
<keyword id="KW-0488">Methylation</keyword>
<keyword id="KW-0547">Nucleotide-binding</keyword>
<keyword id="KW-0636">Prenylation</keyword>
<keyword id="KW-0653">Protein transport</keyword>
<keyword id="KW-0770">Synapse</keyword>
<keyword id="KW-0813">Transport</keyword>
<name>RB11B_DIPOM</name>
<evidence type="ECO:0000250" key="1"/>
<evidence type="ECO:0000250" key="2">
    <source>
        <dbReference type="UniProtKB" id="O35509"/>
    </source>
</evidence>
<evidence type="ECO:0000250" key="3">
    <source>
        <dbReference type="UniProtKB" id="P46638"/>
    </source>
</evidence>
<evidence type="ECO:0000250" key="4">
    <source>
        <dbReference type="UniProtKB" id="Q15907"/>
    </source>
</evidence>
<evidence type="ECO:0000255" key="5"/>
<evidence type="ECO:0000256" key="6">
    <source>
        <dbReference type="SAM" id="MobiDB-lite"/>
    </source>
</evidence>
<evidence type="ECO:0000305" key="7"/>
<comment type="function">
    <text evidence="4">The small GTPases Rab are key regulators of intracellular membrane trafficking, from the formation of transport vesicles to their fusion with membranes. Rabs cycle between an inactive GDP-bound form and an active GTP-bound form that is able to recruit to membranes different set of downstream effectors directly responsible for vesicle formation, movement, tethering and fusion. That Rab plays a role in endocytic recycling, regulating apical recycling of several transmembrane proteins including cystic fibrosis transmembrane conductance regulator/CFTR, epithelial sodium channel/ENaC, potassium voltage-gated channel, and voltage-dependent L-type calcium channel. May also regulate constitutive and regulated secretion, like insulin granule exocytosis. Required for melanosome transport and release from melanocytes. Also regulates V-ATPase intracellular transport in response to extracellular acidosis (By similarity).</text>
</comment>
<comment type="catalytic activity">
    <reaction evidence="4">
        <text>GTP + H2O = GDP + phosphate + H(+)</text>
        <dbReference type="Rhea" id="RHEA:19669"/>
        <dbReference type="ChEBI" id="CHEBI:15377"/>
        <dbReference type="ChEBI" id="CHEBI:15378"/>
        <dbReference type="ChEBI" id="CHEBI:37565"/>
        <dbReference type="ChEBI" id="CHEBI:43474"/>
        <dbReference type="ChEBI" id="CHEBI:58189"/>
        <dbReference type="EC" id="3.6.5.2"/>
    </reaction>
    <physiologicalReaction direction="left-to-right" evidence="4">
        <dbReference type="Rhea" id="RHEA:19670"/>
    </physiologicalReaction>
</comment>
<comment type="cofactor">
    <cofactor evidence="4">
        <name>Mg(2+)</name>
        <dbReference type="ChEBI" id="CHEBI:18420"/>
    </cofactor>
</comment>
<comment type="activity regulation">
    <text evidence="7">Regulated by guanine nucleotide exchange factors (GEFs) which promote the exchange of bound GDP for free GTP. Regulated by GTPase activating proteins (GAPs) which increase the GTP hydrolysis activity. Inhibited by GDP dissociation inhibitors (GDIs) which prevent Rab-GDP dissociation.</text>
</comment>
<comment type="subcellular location">
    <subcellularLocation>
        <location evidence="3">Recycling endosome membrane</location>
        <topology evidence="3">Lipid-anchor</topology>
        <orientation evidence="3">Cytoplasmic side</orientation>
    </subcellularLocation>
    <subcellularLocation>
        <location evidence="2">Cytoplasmic vesicle</location>
        <location evidence="2">Secretory vesicle</location>
        <location evidence="2">Synaptic vesicle membrane</location>
        <topology evidence="2">Lipid-anchor</topology>
        <orientation evidence="2">Cytoplasmic side</orientation>
    </subcellularLocation>
    <subcellularLocation>
        <location evidence="4">Cytoplasmic vesicle</location>
        <location evidence="4">Phagosome membrane</location>
        <topology evidence="4">Lipid-anchor</topology>
        <orientation evidence="4">Cytoplasmic side</orientation>
    </subcellularLocation>
    <subcellularLocation>
        <location evidence="4">Cytoplasmic vesicle</location>
    </subcellularLocation>
</comment>
<comment type="domain">
    <text evidence="4">Switch 1, switch 2 and the interswitch regions are characteristic of Rab GTPases and mediate the interactions with Rab downstream effectors. The switch regions undergo conformational changes upon nucleotide binding which drives interaction with specific sets of effector proteins, with most effectors only binding to GTP-bound Rab.</text>
</comment>
<comment type="similarity">
    <text evidence="7">Belongs to the small GTPase superfamily. Rab family.</text>
</comment>
<proteinExistence type="evidence at transcript level"/>
<accession>P22129</accession>
<feature type="initiator methionine" description="Removed" evidence="1">
    <location>
        <position position="1"/>
    </location>
</feature>
<feature type="chain" id="PRO_0000121161" description="Ras-related protein Rab-11B">
    <location>
        <begin position="2"/>
        <end position="215"/>
    </location>
</feature>
<feature type="propeptide" id="PRO_0000370818" description="Removed in mature form" evidence="5">
    <location>
        <begin position="216"/>
        <end position="218"/>
    </location>
</feature>
<feature type="region of interest" description="Disordered" evidence="6">
    <location>
        <begin position="183"/>
        <end position="218"/>
    </location>
</feature>
<feature type="short sequence motif" description="Switch 1" evidence="4">
    <location>
        <begin position="36"/>
        <end position="47"/>
    </location>
</feature>
<feature type="short sequence motif" description="Switch 2" evidence="4">
    <location>
        <begin position="67"/>
        <end position="86"/>
    </location>
</feature>
<feature type="compositionally biased region" description="Polar residues" evidence="6">
    <location>
        <begin position="201"/>
        <end position="218"/>
    </location>
</feature>
<feature type="binding site" evidence="4">
    <location>
        <position position="20"/>
    </location>
    <ligand>
        <name>GTP</name>
        <dbReference type="ChEBI" id="CHEBI:37565"/>
    </ligand>
</feature>
<feature type="binding site" evidence="4">
    <location>
        <position position="21"/>
    </location>
    <ligand>
        <name>GTP</name>
        <dbReference type="ChEBI" id="CHEBI:37565"/>
    </ligand>
</feature>
<feature type="binding site" evidence="4">
    <location>
        <position position="23"/>
    </location>
    <ligand>
        <name>GTP</name>
        <dbReference type="ChEBI" id="CHEBI:37565"/>
    </ligand>
</feature>
<feature type="binding site" evidence="4">
    <location>
        <position position="24"/>
    </location>
    <ligand>
        <name>GTP</name>
        <dbReference type="ChEBI" id="CHEBI:37565"/>
    </ligand>
</feature>
<feature type="binding site" evidence="4">
    <location>
        <position position="25"/>
    </location>
    <ligand>
        <name>GTP</name>
        <dbReference type="ChEBI" id="CHEBI:37565"/>
    </ligand>
</feature>
<feature type="binding site" evidence="4">
    <location>
        <position position="25"/>
    </location>
    <ligand>
        <name>Mg(2+)</name>
        <dbReference type="ChEBI" id="CHEBI:18420"/>
    </ligand>
</feature>
<feature type="binding site" evidence="4">
    <location>
        <position position="26"/>
    </location>
    <ligand>
        <name>GTP</name>
        <dbReference type="ChEBI" id="CHEBI:37565"/>
    </ligand>
</feature>
<feature type="binding site" evidence="4">
    <location>
        <position position="37"/>
    </location>
    <ligand>
        <name>GTP</name>
        <dbReference type="ChEBI" id="CHEBI:37565"/>
    </ligand>
</feature>
<feature type="binding site" evidence="4">
    <location>
        <position position="38"/>
    </location>
    <ligand>
        <name>GTP</name>
        <dbReference type="ChEBI" id="CHEBI:37565"/>
    </ligand>
</feature>
<feature type="binding site" evidence="4">
    <location>
        <position position="40"/>
    </location>
    <ligand>
        <name>GTP</name>
        <dbReference type="ChEBI" id="CHEBI:37565"/>
    </ligand>
</feature>
<feature type="binding site" evidence="4">
    <location>
        <position position="42"/>
    </location>
    <ligand>
        <name>GTP</name>
        <dbReference type="ChEBI" id="CHEBI:37565"/>
    </ligand>
</feature>
<feature type="binding site" evidence="4">
    <location>
        <position position="43"/>
    </location>
    <ligand>
        <name>GTP</name>
        <dbReference type="ChEBI" id="CHEBI:37565"/>
    </ligand>
</feature>
<feature type="binding site" evidence="4">
    <location>
        <position position="43"/>
    </location>
    <ligand>
        <name>Mg(2+)</name>
        <dbReference type="ChEBI" id="CHEBI:18420"/>
    </ligand>
</feature>
<feature type="binding site" evidence="4">
    <location>
        <position position="66"/>
    </location>
    <ligand>
        <name>Mg(2+)</name>
        <dbReference type="ChEBI" id="CHEBI:18420"/>
    </ligand>
</feature>
<feature type="binding site" evidence="4">
    <location>
        <position position="69"/>
    </location>
    <ligand>
        <name>GTP</name>
        <dbReference type="ChEBI" id="CHEBI:37565"/>
    </ligand>
</feature>
<feature type="binding site" evidence="4">
    <location>
        <position position="124"/>
    </location>
    <ligand>
        <name>GTP</name>
        <dbReference type="ChEBI" id="CHEBI:37565"/>
    </ligand>
</feature>
<feature type="binding site" evidence="4">
    <location>
        <position position="125"/>
    </location>
    <ligand>
        <name>GTP</name>
        <dbReference type="ChEBI" id="CHEBI:37565"/>
    </ligand>
</feature>
<feature type="binding site" evidence="4">
    <location>
        <position position="127"/>
    </location>
    <ligand>
        <name>GTP</name>
        <dbReference type="ChEBI" id="CHEBI:37565"/>
    </ligand>
</feature>
<feature type="binding site" evidence="4">
    <location>
        <position position="155"/>
    </location>
    <ligand>
        <name>GTP</name>
        <dbReference type="ChEBI" id="CHEBI:37565"/>
    </ligand>
</feature>
<feature type="binding site" evidence="4">
    <location>
        <position position="156"/>
    </location>
    <ligand>
        <name>GTP</name>
        <dbReference type="ChEBI" id="CHEBI:37565"/>
    </ligand>
</feature>
<feature type="modified residue" description="N-acetylglycine" evidence="1">
    <location>
        <position position="2"/>
    </location>
</feature>
<feature type="modified residue" description="Cysteine methyl ester" evidence="5">
    <location>
        <position position="215"/>
    </location>
</feature>
<feature type="lipid moiety-binding region" description="S-geranylgeranyl cysteine" evidence="1">
    <location>
        <position position="214"/>
    </location>
</feature>
<feature type="lipid moiety-binding region" description="S-geranylgeranyl cysteine" evidence="1">
    <location>
        <position position="215"/>
    </location>
</feature>
<organism>
    <name type="scientific">Diplobatis ommata</name>
    <name type="common">Ocellated electric ray</name>
    <name type="synonym">Discopyge ommata</name>
    <dbReference type="NCBI Taxonomy" id="1870830"/>
    <lineage>
        <taxon>Eukaryota</taxon>
        <taxon>Metazoa</taxon>
        <taxon>Chordata</taxon>
        <taxon>Craniata</taxon>
        <taxon>Vertebrata</taxon>
        <taxon>Chondrichthyes</taxon>
        <taxon>Elasmobranchii</taxon>
        <taxon>Batoidea</taxon>
        <taxon>Torpediniformes</taxon>
        <taxon>Narcinidae</taxon>
        <taxon>Diplobatis</taxon>
    </lineage>
</organism>
<protein>
    <recommendedName>
        <fullName>Ras-related protein Rab-11B</fullName>
        <ecNumber evidence="4">3.6.5.2</ecNumber>
    </recommendedName>
    <alternativeName>
        <fullName>ORA3</fullName>
    </alternativeName>
</protein>
<dbReference type="EC" id="3.6.5.2" evidence="4"/>
<dbReference type="EMBL" id="M38392">
    <property type="protein sequence ID" value="AAA49233.1"/>
    <property type="molecule type" value="mRNA"/>
</dbReference>
<dbReference type="PIR" id="C38625">
    <property type="entry name" value="C38625"/>
</dbReference>
<dbReference type="SMR" id="P22129"/>
<dbReference type="GO" id="GO:0045335">
    <property type="term" value="C:phagocytic vesicle"/>
    <property type="evidence" value="ECO:0000250"/>
    <property type="project" value="UniProtKB"/>
</dbReference>
<dbReference type="GO" id="GO:0030670">
    <property type="term" value="C:phagocytic vesicle membrane"/>
    <property type="evidence" value="ECO:0007669"/>
    <property type="project" value="UniProtKB-SubCell"/>
</dbReference>
<dbReference type="GO" id="GO:0055038">
    <property type="term" value="C:recycling endosome membrane"/>
    <property type="evidence" value="ECO:0007669"/>
    <property type="project" value="UniProtKB-SubCell"/>
</dbReference>
<dbReference type="GO" id="GO:0008021">
    <property type="term" value="C:synaptic vesicle"/>
    <property type="evidence" value="ECO:0000250"/>
    <property type="project" value="UniProtKB"/>
</dbReference>
<dbReference type="GO" id="GO:0030672">
    <property type="term" value="C:synaptic vesicle membrane"/>
    <property type="evidence" value="ECO:0007669"/>
    <property type="project" value="UniProtKB-SubCell"/>
</dbReference>
<dbReference type="GO" id="GO:0019003">
    <property type="term" value="F:GDP binding"/>
    <property type="evidence" value="ECO:0000250"/>
    <property type="project" value="UniProtKB"/>
</dbReference>
<dbReference type="GO" id="GO:0005525">
    <property type="term" value="F:GTP binding"/>
    <property type="evidence" value="ECO:0000250"/>
    <property type="project" value="UniProtKB"/>
</dbReference>
<dbReference type="GO" id="GO:0003924">
    <property type="term" value="F:GTPase activity"/>
    <property type="evidence" value="ECO:0000250"/>
    <property type="project" value="UniProtKB"/>
</dbReference>
<dbReference type="GO" id="GO:0071468">
    <property type="term" value="P:cellular response to acidic pH"/>
    <property type="evidence" value="ECO:0000250"/>
    <property type="project" value="UniProtKB"/>
</dbReference>
<dbReference type="GO" id="GO:0045054">
    <property type="term" value="P:constitutive secretory pathway"/>
    <property type="evidence" value="ECO:0000250"/>
    <property type="project" value="UniProtKB"/>
</dbReference>
<dbReference type="GO" id="GO:0032456">
    <property type="term" value="P:endocytic recycling"/>
    <property type="evidence" value="ECO:0000250"/>
    <property type="project" value="UniProtKB"/>
</dbReference>
<dbReference type="GO" id="GO:0035773">
    <property type="term" value="P:insulin secretion involved in cellular response to glucose stimulus"/>
    <property type="evidence" value="ECO:0000250"/>
    <property type="project" value="UniProtKB"/>
</dbReference>
<dbReference type="GO" id="GO:0032402">
    <property type="term" value="P:melanosome transport"/>
    <property type="evidence" value="ECO:0000250"/>
    <property type="project" value="UniProtKB"/>
</dbReference>
<dbReference type="GO" id="GO:0001881">
    <property type="term" value="P:receptor recycling"/>
    <property type="evidence" value="ECO:0000250"/>
    <property type="project" value="UniProtKB"/>
</dbReference>
<dbReference type="GO" id="GO:0045055">
    <property type="term" value="P:regulated exocytosis"/>
    <property type="evidence" value="ECO:0000250"/>
    <property type="project" value="UniProtKB"/>
</dbReference>
<dbReference type="GO" id="GO:2001135">
    <property type="term" value="P:regulation of endocytic recycling"/>
    <property type="evidence" value="ECO:0000250"/>
    <property type="project" value="UniProtKB"/>
</dbReference>
<dbReference type="GO" id="GO:0044070">
    <property type="term" value="P:regulation of monoatomic anion transport"/>
    <property type="evidence" value="ECO:0000250"/>
    <property type="project" value="UniProtKB"/>
</dbReference>
<dbReference type="GO" id="GO:2000008">
    <property type="term" value="P:regulation of protein localization to cell surface"/>
    <property type="evidence" value="ECO:0000250"/>
    <property type="project" value="UniProtKB"/>
</dbReference>
<dbReference type="GO" id="GO:0033572">
    <property type="term" value="P:transferrin transport"/>
    <property type="evidence" value="ECO:0000250"/>
    <property type="project" value="UniProtKB"/>
</dbReference>
<dbReference type="CDD" id="cd01868">
    <property type="entry name" value="Rab11_like"/>
    <property type="match status" value="1"/>
</dbReference>
<dbReference type="FunFam" id="3.40.50.300:FF:000085">
    <property type="entry name" value="Putative ras-related protein rab-11a"/>
    <property type="match status" value="1"/>
</dbReference>
<dbReference type="Gene3D" id="3.40.50.300">
    <property type="entry name" value="P-loop containing nucleotide triphosphate hydrolases"/>
    <property type="match status" value="1"/>
</dbReference>
<dbReference type="InterPro" id="IPR027417">
    <property type="entry name" value="P-loop_NTPase"/>
</dbReference>
<dbReference type="InterPro" id="IPR050209">
    <property type="entry name" value="Rab_GTPases_membrane_traffic"/>
</dbReference>
<dbReference type="InterPro" id="IPR005225">
    <property type="entry name" value="Small_GTP-bd"/>
</dbReference>
<dbReference type="InterPro" id="IPR001806">
    <property type="entry name" value="Small_GTPase"/>
</dbReference>
<dbReference type="NCBIfam" id="TIGR00231">
    <property type="entry name" value="small_GTP"/>
    <property type="match status" value="1"/>
</dbReference>
<dbReference type="PANTHER" id="PTHR47979">
    <property type="entry name" value="DRAB11-RELATED"/>
    <property type="match status" value="1"/>
</dbReference>
<dbReference type="Pfam" id="PF00071">
    <property type="entry name" value="Ras"/>
    <property type="match status" value="1"/>
</dbReference>
<dbReference type="PRINTS" id="PR00449">
    <property type="entry name" value="RASTRNSFRMNG"/>
</dbReference>
<dbReference type="SMART" id="SM00175">
    <property type="entry name" value="RAB"/>
    <property type="match status" value="1"/>
</dbReference>
<dbReference type="SMART" id="SM00176">
    <property type="entry name" value="RAN"/>
    <property type="match status" value="1"/>
</dbReference>
<dbReference type="SMART" id="SM00173">
    <property type="entry name" value="RAS"/>
    <property type="match status" value="1"/>
</dbReference>
<dbReference type="SMART" id="SM00174">
    <property type="entry name" value="RHO"/>
    <property type="match status" value="1"/>
</dbReference>
<dbReference type="SUPFAM" id="SSF52540">
    <property type="entry name" value="P-loop containing nucleoside triphosphate hydrolases"/>
    <property type="match status" value="1"/>
</dbReference>
<dbReference type="PROSITE" id="PS51419">
    <property type="entry name" value="RAB"/>
    <property type="match status" value="1"/>
</dbReference>
<reference key="1">
    <citation type="journal article" date="1991" name="J. Biol. Chem.">
        <title>A family of ras-like GTP-binding proteins expressed in electromotor neurons.</title>
        <authorList>
            <person name="Ngsee J.K."/>
            <person name="Elferink L.A."/>
            <person name="Scheller R.H."/>
        </authorList>
    </citation>
    <scope>NUCLEOTIDE SEQUENCE [MRNA]</scope>
    <source>
        <tissue>Electric lobe</tissue>
    </source>
</reference>
<sequence length="218" mass="24556">MGTRDDEYDYLFKVVLIGDSGVGKSNLLSRFTRNEFNLESKSTIGVEFATRSIQVDGKTIKAQIWDTAGQERYRAITSAYYRGAVGALLVYDIAKHLTYENVERWLKELRDHADNNIVIMLVGNKSDLRHLRAVPTDEARAFAEKNNLSFIETSALDSTNVEEAFKNILTEIYRIVSQKQISDRSAHDESPGNNVVDISVPPTTDGQKSNKLQCCQNM</sequence>